<reference key="1">
    <citation type="journal article" date="2009" name="Environ. Microbiol.">
        <title>Contribution of mobile genetic elements to Desulfovibrio vulgaris genome plasticity.</title>
        <authorList>
            <person name="Walker C.B."/>
            <person name="Stolyar S."/>
            <person name="Chivian D."/>
            <person name="Pinel N."/>
            <person name="Gabster J.A."/>
            <person name="Dehal P.S."/>
            <person name="He Z."/>
            <person name="Yang Z.K."/>
            <person name="Yen H.C."/>
            <person name="Zhou J."/>
            <person name="Wall J.D."/>
            <person name="Hazen T.C."/>
            <person name="Arkin A.P."/>
            <person name="Stahl D.A."/>
        </authorList>
    </citation>
    <scope>NUCLEOTIDE SEQUENCE [LARGE SCALE GENOMIC DNA]</scope>
    <source>
        <strain>DP4</strain>
    </source>
</reference>
<protein>
    <recommendedName>
        <fullName evidence="1">Large ribosomal subunit protein bL35</fullName>
    </recommendedName>
    <alternativeName>
        <fullName evidence="3">50S ribosomal protein L35</fullName>
    </alternativeName>
</protein>
<name>RL35_NITV4</name>
<gene>
    <name evidence="1" type="primary">rpmI</name>
    <name type="ordered locus">Dvul_0709</name>
</gene>
<feature type="chain" id="PRO_1000050686" description="Large ribosomal subunit protein bL35">
    <location>
        <begin position="1"/>
        <end position="65"/>
    </location>
</feature>
<feature type="region of interest" description="Disordered" evidence="2">
    <location>
        <begin position="1"/>
        <end position="25"/>
    </location>
</feature>
<feature type="compositionally biased region" description="Basic residues" evidence="2">
    <location>
        <begin position="1"/>
        <end position="11"/>
    </location>
</feature>
<accession>A1VBB6</accession>
<evidence type="ECO:0000255" key="1">
    <source>
        <dbReference type="HAMAP-Rule" id="MF_00514"/>
    </source>
</evidence>
<evidence type="ECO:0000256" key="2">
    <source>
        <dbReference type="SAM" id="MobiDB-lite"/>
    </source>
</evidence>
<evidence type="ECO:0000305" key="3"/>
<dbReference type="EMBL" id="CP000527">
    <property type="protein sequence ID" value="ABM27732.1"/>
    <property type="molecule type" value="Genomic_DNA"/>
</dbReference>
<dbReference type="RefSeq" id="WP_010939806.1">
    <property type="nucleotide sequence ID" value="NC_008751.1"/>
</dbReference>
<dbReference type="SMR" id="A1VBB6"/>
<dbReference type="KEGG" id="dvl:Dvul_0709"/>
<dbReference type="HOGENOM" id="CLU_169643_1_1_7"/>
<dbReference type="Proteomes" id="UP000009173">
    <property type="component" value="Chromosome"/>
</dbReference>
<dbReference type="GO" id="GO:0022625">
    <property type="term" value="C:cytosolic large ribosomal subunit"/>
    <property type="evidence" value="ECO:0007669"/>
    <property type="project" value="TreeGrafter"/>
</dbReference>
<dbReference type="GO" id="GO:0003735">
    <property type="term" value="F:structural constituent of ribosome"/>
    <property type="evidence" value="ECO:0007669"/>
    <property type="project" value="InterPro"/>
</dbReference>
<dbReference type="GO" id="GO:0006412">
    <property type="term" value="P:translation"/>
    <property type="evidence" value="ECO:0007669"/>
    <property type="project" value="UniProtKB-UniRule"/>
</dbReference>
<dbReference type="FunFam" id="4.10.410.60:FF:000001">
    <property type="entry name" value="50S ribosomal protein L35"/>
    <property type="match status" value="1"/>
</dbReference>
<dbReference type="Gene3D" id="4.10.410.60">
    <property type="match status" value="1"/>
</dbReference>
<dbReference type="HAMAP" id="MF_00514">
    <property type="entry name" value="Ribosomal_bL35"/>
    <property type="match status" value="1"/>
</dbReference>
<dbReference type="InterPro" id="IPR001706">
    <property type="entry name" value="Ribosomal_bL35"/>
</dbReference>
<dbReference type="InterPro" id="IPR021137">
    <property type="entry name" value="Ribosomal_bL35-like"/>
</dbReference>
<dbReference type="InterPro" id="IPR018265">
    <property type="entry name" value="Ribosomal_bL35_CS"/>
</dbReference>
<dbReference type="InterPro" id="IPR037229">
    <property type="entry name" value="Ribosomal_bL35_sf"/>
</dbReference>
<dbReference type="NCBIfam" id="TIGR00001">
    <property type="entry name" value="rpmI_bact"/>
    <property type="match status" value="1"/>
</dbReference>
<dbReference type="PANTHER" id="PTHR33343">
    <property type="entry name" value="54S RIBOSOMAL PROTEIN BL35M"/>
    <property type="match status" value="1"/>
</dbReference>
<dbReference type="PANTHER" id="PTHR33343:SF1">
    <property type="entry name" value="LARGE RIBOSOMAL SUBUNIT PROTEIN BL35M"/>
    <property type="match status" value="1"/>
</dbReference>
<dbReference type="Pfam" id="PF01632">
    <property type="entry name" value="Ribosomal_L35p"/>
    <property type="match status" value="1"/>
</dbReference>
<dbReference type="PRINTS" id="PR00064">
    <property type="entry name" value="RIBOSOMALL35"/>
</dbReference>
<dbReference type="SUPFAM" id="SSF143034">
    <property type="entry name" value="L35p-like"/>
    <property type="match status" value="1"/>
</dbReference>
<dbReference type="PROSITE" id="PS00936">
    <property type="entry name" value="RIBOSOMAL_L35"/>
    <property type="match status" value="1"/>
</dbReference>
<sequence length="65" mass="7503">MPKIKTRRSAAKRFSVTGSGKFRRRKQNLRHILTKKSAKRKMNLGQSAIVDATNEKAVRRMMPYA</sequence>
<keyword id="KW-0687">Ribonucleoprotein</keyword>
<keyword id="KW-0689">Ribosomal protein</keyword>
<organism>
    <name type="scientific">Nitratidesulfovibrio vulgaris (strain DP4)</name>
    <name type="common">Desulfovibrio vulgaris</name>
    <dbReference type="NCBI Taxonomy" id="391774"/>
    <lineage>
        <taxon>Bacteria</taxon>
        <taxon>Pseudomonadati</taxon>
        <taxon>Thermodesulfobacteriota</taxon>
        <taxon>Desulfovibrionia</taxon>
        <taxon>Desulfovibrionales</taxon>
        <taxon>Desulfovibrionaceae</taxon>
        <taxon>Nitratidesulfovibrio</taxon>
    </lineage>
</organism>
<comment type="similarity">
    <text evidence="1">Belongs to the bacterial ribosomal protein bL35 family.</text>
</comment>
<proteinExistence type="inferred from homology"/>